<accession>B0FYK7</accession>
<name>RPPA_STRC0</name>
<comment type="function">
    <text evidence="3">Involved in the biosynthesis of melanin but also various secondary metabolites containing a naphthoquinone ring. Catalyzes the iterative condensation of five CoA-linked malonyl units to form a pentaketide intermediate. THNS subsequently catalyzes the dual intramolecular Claisen and aldol condensations of this linear intermediate to produce the fused ring of 1,3,6,8-tetrahydroxynaphthalene (THN).</text>
</comment>
<comment type="catalytic activity">
    <reaction evidence="3">
        <text>5 malonyl-CoA + 5 H(+) = naphthalene-1,3,6,8-tetrol + 5 CO2 + 5 CoA + H2O</text>
        <dbReference type="Rhea" id="RHEA:41524"/>
        <dbReference type="ChEBI" id="CHEBI:15377"/>
        <dbReference type="ChEBI" id="CHEBI:15378"/>
        <dbReference type="ChEBI" id="CHEBI:16526"/>
        <dbReference type="ChEBI" id="CHEBI:18365"/>
        <dbReference type="ChEBI" id="CHEBI:57287"/>
        <dbReference type="ChEBI" id="CHEBI:57384"/>
        <dbReference type="EC" id="2.3.1.233"/>
    </reaction>
</comment>
<comment type="pathway">
    <text evidence="1">Pigment biosynthesis; melanin biosynthesis.</text>
</comment>
<comment type="subunit">
    <text evidence="2">Homodimer.</text>
</comment>
<comment type="similarity">
    <text evidence="5">Belongs to the thiolase-like superfamily. Chalcone/stilbene synthases family.</text>
</comment>
<reference key="1">
    <citation type="journal article" date="2008" name="Mol. Cells">
        <title>Identification of a cryptic type III polyketide synthase (1,3,6,8-tetrahydroxynaphthalene synthase) from Streptomyces peucetius ATCC 27952.</title>
        <authorList>
            <person name="Ghimire G.P."/>
            <person name="Oh T.J."/>
            <person name="Liou K."/>
            <person name="Sohng J.K."/>
        </authorList>
    </citation>
    <scope>NUCLEOTIDE SEQUENCE [GENOMIC DNA]</scope>
    <scope>FUNCTION</scope>
    <scope>CATALYTIC ACTIVITY</scope>
    <source>
        <strain>ATCC 27952 / DSM 41231 / NBRC 14660 / 106FI</strain>
    </source>
</reference>
<organism>
    <name type="scientific">Streptomyces peucetius subsp. caesius</name>
    <dbReference type="NCBI Taxonomy" id="55158"/>
    <lineage>
        <taxon>Bacteria</taxon>
        <taxon>Bacillati</taxon>
        <taxon>Actinomycetota</taxon>
        <taxon>Actinomycetes</taxon>
        <taxon>Kitasatosporales</taxon>
        <taxon>Streptomycetaceae</taxon>
        <taxon>Streptomyces</taxon>
    </lineage>
</organism>
<proteinExistence type="evidence at protein level"/>
<gene>
    <name evidence="4" type="primary">rppA</name>
</gene>
<sequence length="377" mass="39081">MRVPVAVDDLVAPSTMGERHTVIDRGTSVAAVHTALPPHRYAQSDLTELIADLCLEPGADRALLRRLHTSAGVRTRHLALPIEQYAGLGDFGQANAAWLTVGLALAEEALSGALDAAGLTAADIDLLVCTSITGVAAPSLDARLAVRMGMRADVKRVPVFGLGCVGGAAGLGRLHDYLLGHPDDTAVLLSVELCSLTLQRDGSLANLVAGALFGDGAAAVVARGGDAGRRGAGWPMVAATRGHLYPDTEHLLGWRIGASGFRVVVDAGIPDVVRTHLGGDLRNFLATHGLVPDDIGTWICHPGGPKVLAAVGDALELPDGALDSSWRSLAGVGNLSSASVLRVLEDVATRCRPDPGTWGVLLAMGPGFCAEFVLLRW</sequence>
<keyword id="KW-0012">Acyltransferase</keyword>
<keyword id="KW-0470">Melanin biosynthesis</keyword>
<keyword id="KW-0808">Transferase</keyword>
<evidence type="ECO:0000250" key="1">
    <source>
        <dbReference type="UniProtKB" id="Q54240"/>
    </source>
</evidence>
<evidence type="ECO:0000250" key="2">
    <source>
        <dbReference type="UniProtKB" id="Q9FCA7"/>
    </source>
</evidence>
<evidence type="ECO:0000269" key="3">
    <source>
    </source>
</evidence>
<evidence type="ECO:0000303" key="4">
    <source>
    </source>
</evidence>
<evidence type="ECO:0000305" key="5"/>
<protein>
    <recommendedName>
        <fullName evidence="4">1,3,6,8-tetrahydroxynaphthalene synthase</fullName>
        <shortName evidence="4">THNS</shortName>
        <ecNumber evidence="3">2.3.1.233</ecNumber>
    </recommendedName>
    <alternativeName>
        <fullName evidence="5">1,3,6,8-tetrahydroxynaphthalene synthesis polyketide synthase type III</fullName>
    </alternativeName>
</protein>
<dbReference type="EC" id="2.3.1.233" evidence="3"/>
<dbReference type="EMBL" id="EU365174">
    <property type="protein sequence ID" value="ABY71276.1"/>
    <property type="molecule type" value="Genomic_DNA"/>
</dbReference>
<dbReference type="SMR" id="B0FYK7"/>
<dbReference type="KEGG" id="ag:ABY71276"/>
<dbReference type="BioCyc" id="MetaCyc:MONOMER-18701"/>
<dbReference type="BRENDA" id="2.3.1.233">
    <property type="organism ID" value="6073"/>
</dbReference>
<dbReference type="UniPathway" id="UPA00785"/>
<dbReference type="GO" id="GO:0016747">
    <property type="term" value="F:acyltransferase activity, transferring groups other than amino-acyl groups"/>
    <property type="evidence" value="ECO:0000314"/>
    <property type="project" value="UniProtKB"/>
</dbReference>
<dbReference type="GO" id="GO:0042438">
    <property type="term" value="P:melanin biosynthetic process"/>
    <property type="evidence" value="ECO:0000314"/>
    <property type="project" value="UniProtKB"/>
</dbReference>
<dbReference type="GO" id="GO:0030639">
    <property type="term" value="P:polyketide biosynthetic process"/>
    <property type="evidence" value="ECO:0007669"/>
    <property type="project" value="TreeGrafter"/>
</dbReference>
<dbReference type="CDD" id="cd00831">
    <property type="entry name" value="CHS_like"/>
    <property type="match status" value="1"/>
</dbReference>
<dbReference type="Gene3D" id="3.40.47.10">
    <property type="match status" value="2"/>
</dbReference>
<dbReference type="InterPro" id="IPR012328">
    <property type="entry name" value="Chalcone/stilbene_synt_C"/>
</dbReference>
<dbReference type="InterPro" id="IPR001099">
    <property type="entry name" value="Chalcone/stilbene_synt_N"/>
</dbReference>
<dbReference type="InterPro" id="IPR011141">
    <property type="entry name" value="Polyketide_synthase_type-III"/>
</dbReference>
<dbReference type="InterPro" id="IPR016039">
    <property type="entry name" value="Thiolase-like"/>
</dbReference>
<dbReference type="PANTHER" id="PTHR11877:SF99">
    <property type="entry name" value="1,3,6,8-TETRAHYDROXYNAPHTHALENE SYNTHASE"/>
    <property type="match status" value="1"/>
</dbReference>
<dbReference type="PANTHER" id="PTHR11877">
    <property type="entry name" value="HYDROXYMETHYLGLUTARYL-COA SYNTHASE"/>
    <property type="match status" value="1"/>
</dbReference>
<dbReference type="Pfam" id="PF02797">
    <property type="entry name" value="Chal_sti_synt_C"/>
    <property type="match status" value="1"/>
</dbReference>
<dbReference type="Pfam" id="PF00195">
    <property type="entry name" value="Chal_sti_synt_N"/>
    <property type="match status" value="1"/>
</dbReference>
<dbReference type="PIRSF" id="PIRSF000451">
    <property type="entry name" value="PKS_III"/>
    <property type="match status" value="1"/>
</dbReference>
<dbReference type="SUPFAM" id="SSF53901">
    <property type="entry name" value="Thiolase-like"/>
    <property type="match status" value="1"/>
</dbReference>
<feature type="chain" id="PRO_0000430879" description="1,3,6,8-tetrahydroxynaphthalene synthase">
    <location>
        <begin position="1"/>
        <end position="377"/>
    </location>
</feature>
<feature type="active site" evidence="1">
    <location>
        <position position="164"/>
    </location>
</feature>